<accession>A5G7W5</accession>
<sequence length="185" mass="21077">MTKDVINNMSTHMDKTIDALRKEYQRVRTGRASTGLLDEIKVDFYGTPSPINQVATLAVPEPRTITLQPWDAKMIPVIEKAIMNANLGLTPANDGKVIRLNIPPLTEERRKDIVKQLKKLAEDAKVAVRNIRRDAIDELKKQEKDKKISEDDLKRAEKEVQDVTNSHVAKIDEVFVHKEKEVMEV</sequence>
<protein>
    <recommendedName>
        <fullName evidence="1">Ribosome-recycling factor</fullName>
        <shortName evidence="1">RRF</shortName>
    </recommendedName>
    <alternativeName>
        <fullName evidence="1">Ribosome-releasing factor</fullName>
    </alternativeName>
</protein>
<feature type="chain" id="PRO_1000074581" description="Ribosome-recycling factor">
    <location>
        <begin position="1"/>
        <end position="185"/>
    </location>
</feature>
<feature type="region of interest" description="Disordered" evidence="2">
    <location>
        <begin position="141"/>
        <end position="161"/>
    </location>
</feature>
<reference key="1">
    <citation type="submission" date="2007-05" db="EMBL/GenBank/DDBJ databases">
        <title>Complete sequence of Geobacter uraniireducens Rf4.</title>
        <authorList>
            <consortium name="US DOE Joint Genome Institute"/>
            <person name="Copeland A."/>
            <person name="Lucas S."/>
            <person name="Lapidus A."/>
            <person name="Barry K."/>
            <person name="Detter J.C."/>
            <person name="Glavina del Rio T."/>
            <person name="Hammon N."/>
            <person name="Israni S."/>
            <person name="Dalin E."/>
            <person name="Tice H."/>
            <person name="Pitluck S."/>
            <person name="Chertkov O."/>
            <person name="Brettin T."/>
            <person name="Bruce D."/>
            <person name="Han C."/>
            <person name="Schmutz J."/>
            <person name="Larimer F."/>
            <person name="Land M."/>
            <person name="Hauser L."/>
            <person name="Kyrpides N."/>
            <person name="Mikhailova N."/>
            <person name="Shelobolina E."/>
            <person name="Aklujkar M."/>
            <person name="Lovley D."/>
            <person name="Richardson P."/>
        </authorList>
    </citation>
    <scope>NUCLEOTIDE SEQUENCE [LARGE SCALE GENOMIC DNA]</scope>
    <source>
        <strain>ATCC BAA-1134 / JCM 13001 / Rf4</strain>
    </source>
</reference>
<comment type="function">
    <text evidence="1">Responsible for the release of ribosomes from messenger RNA at the termination of protein biosynthesis. May increase the efficiency of translation by recycling ribosomes from one round of translation to another.</text>
</comment>
<comment type="subcellular location">
    <subcellularLocation>
        <location evidence="1">Cytoplasm</location>
    </subcellularLocation>
</comment>
<comment type="similarity">
    <text evidence="1">Belongs to the RRF family.</text>
</comment>
<gene>
    <name evidence="1" type="primary">frr</name>
    <name type="ordered locus">Gura_3730</name>
</gene>
<proteinExistence type="inferred from homology"/>
<keyword id="KW-0963">Cytoplasm</keyword>
<keyword id="KW-0648">Protein biosynthesis</keyword>
<keyword id="KW-1185">Reference proteome</keyword>
<name>RRF_GEOUR</name>
<organism>
    <name type="scientific">Geotalea uraniireducens (strain Rf4)</name>
    <name type="common">Geobacter uraniireducens</name>
    <dbReference type="NCBI Taxonomy" id="351605"/>
    <lineage>
        <taxon>Bacteria</taxon>
        <taxon>Pseudomonadati</taxon>
        <taxon>Thermodesulfobacteriota</taxon>
        <taxon>Desulfuromonadia</taxon>
        <taxon>Geobacterales</taxon>
        <taxon>Geobacteraceae</taxon>
        <taxon>Geotalea</taxon>
    </lineage>
</organism>
<dbReference type="EMBL" id="CP000698">
    <property type="protein sequence ID" value="ABQ27883.1"/>
    <property type="molecule type" value="Genomic_DNA"/>
</dbReference>
<dbReference type="RefSeq" id="WP_011940534.1">
    <property type="nucleotide sequence ID" value="NC_009483.1"/>
</dbReference>
<dbReference type="SMR" id="A5G7W5"/>
<dbReference type="STRING" id="351605.Gura_3730"/>
<dbReference type="KEGG" id="gur:Gura_3730"/>
<dbReference type="HOGENOM" id="CLU_073981_2_0_7"/>
<dbReference type="OrthoDB" id="9804006at2"/>
<dbReference type="Proteomes" id="UP000006695">
    <property type="component" value="Chromosome"/>
</dbReference>
<dbReference type="GO" id="GO:0005829">
    <property type="term" value="C:cytosol"/>
    <property type="evidence" value="ECO:0007669"/>
    <property type="project" value="GOC"/>
</dbReference>
<dbReference type="GO" id="GO:0043023">
    <property type="term" value="F:ribosomal large subunit binding"/>
    <property type="evidence" value="ECO:0007669"/>
    <property type="project" value="TreeGrafter"/>
</dbReference>
<dbReference type="GO" id="GO:0002184">
    <property type="term" value="P:cytoplasmic translational termination"/>
    <property type="evidence" value="ECO:0007669"/>
    <property type="project" value="TreeGrafter"/>
</dbReference>
<dbReference type="CDD" id="cd00520">
    <property type="entry name" value="RRF"/>
    <property type="match status" value="1"/>
</dbReference>
<dbReference type="FunFam" id="1.10.132.20:FF:000001">
    <property type="entry name" value="Ribosome-recycling factor"/>
    <property type="match status" value="1"/>
</dbReference>
<dbReference type="FunFam" id="3.30.1360.40:FF:000001">
    <property type="entry name" value="Ribosome-recycling factor"/>
    <property type="match status" value="1"/>
</dbReference>
<dbReference type="Gene3D" id="3.30.1360.40">
    <property type="match status" value="1"/>
</dbReference>
<dbReference type="Gene3D" id="1.10.132.20">
    <property type="entry name" value="Ribosome-recycling factor"/>
    <property type="match status" value="1"/>
</dbReference>
<dbReference type="HAMAP" id="MF_00040">
    <property type="entry name" value="RRF"/>
    <property type="match status" value="1"/>
</dbReference>
<dbReference type="InterPro" id="IPR002661">
    <property type="entry name" value="Ribosome_recyc_fac"/>
</dbReference>
<dbReference type="InterPro" id="IPR023584">
    <property type="entry name" value="Ribosome_recyc_fac_dom"/>
</dbReference>
<dbReference type="InterPro" id="IPR036191">
    <property type="entry name" value="RRF_sf"/>
</dbReference>
<dbReference type="NCBIfam" id="TIGR00496">
    <property type="entry name" value="frr"/>
    <property type="match status" value="1"/>
</dbReference>
<dbReference type="PANTHER" id="PTHR20982:SF3">
    <property type="entry name" value="MITOCHONDRIAL RIBOSOME RECYCLING FACTOR PSEUDO 1"/>
    <property type="match status" value="1"/>
</dbReference>
<dbReference type="PANTHER" id="PTHR20982">
    <property type="entry name" value="RIBOSOME RECYCLING FACTOR"/>
    <property type="match status" value="1"/>
</dbReference>
<dbReference type="Pfam" id="PF01765">
    <property type="entry name" value="RRF"/>
    <property type="match status" value="1"/>
</dbReference>
<dbReference type="SUPFAM" id="SSF55194">
    <property type="entry name" value="Ribosome recycling factor, RRF"/>
    <property type="match status" value="1"/>
</dbReference>
<evidence type="ECO:0000255" key="1">
    <source>
        <dbReference type="HAMAP-Rule" id="MF_00040"/>
    </source>
</evidence>
<evidence type="ECO:0000256" key="2">
    <source>
        <dbReference type="SAM" id="MobiDB-lite"/>
    </source>
</evidence>